<dbReference type="EC" id="2.1.3.2" evidence="1"/>
<dbReference type="EMBL" id="M97253">
    <property type="protein sequence ID" value="AAD15279.1"/>
    <property type="molecule type" value="Genomic_DNA"/>
</dbReference>
<dbReference type="PIR" id="A56144">
    <property type="entry name" value="A56144"/>
</dbReference>
<dbReference type="RefSeq" id="WP_016501977.1">
    <property type="nucleotide sequence ID" value="NZ_UGUX01000003.1"/>
</dbReference>
<dbReference type="SMR" id="Q59711"/>
<dbReference type="eggNOG" id="COG0540">
    <property type="taxonomic scope" value="Bacteria"/>
</dbReference>
<dbReference type="UniPathway" id="UPA00070">
    <property type="reaction ID" value="UER00116"/>
</dbReference>
<dbReference type="GO" id="GO:0005829">
    <property type="term" value="C:cytosol"/>
    <property type="evidence" value="ECO:0007669"/>
    <property type="project" value="TreeGrafter"/>
</dbReference>
<dbReference type="GO" id="GO:0016597">
    <property type="term" value="F:amino acid binding"/>
    <property type="evidence" value="ECO:0007669"/>
    <property type="project" value="InterPro"/>
</dbReference>
<dbReference type="GO" id="GO:0004070">
    <property type="term" value="F:aspartate carbamoyltransferase activity"/>
    <property type="evidence" value="ECO:0007669"/>
    <property type="project" value="UniProtKB-UniRule"/>
</dbReference>
<dbReference type="GO" id="GO:0006207">
    <property type="term" value="P:'de novo' pyrimidine nucleobase biosynthetic process"/>
    <property type="evidence" value="ECO:0007669"/>
    <property type="project" value="InterPro"/>
</dbReference>
<dbReference type="GO" id="GO:0044205">
    <property type="term" value="P:'de novo' UMP biosynthetic process"/>
    <property type="evidence" value="ECO:0007669"/>
    <property type="project" value="UniProtKB-UniRule"/>
</dbReference>
<dbReference type="GO" id="GO:0006520">
    <property type="term" value="P:amino acid metabolic process"/>
    <property type="evidence" value="ECO:0007669"/>
    <property type="project" value="InterPro"/>
</dbReference>
<dbReference type="FunFam" id="3.40.50.1370:FF:000006">
    <property type="entry name" value="Aspartate carbamoyltransferase"/>
    <property type="match status" value="1"/>
</dbReference>
<dbReference type="FunFam" id="3.40.50.1370:FF:000007">
    <property type="entry name" value="Aspartate carbamoyltransferase"/>
    <property type="match status" value="1"/>
</dbReference>
<dbReference type="Gene3D" id="3.40.50.1370">
    <property type="entry name" value="Aspartate/ornithine carbamoyltransferase"/>
    <property type="match status" value="2"/>
</dbReference>
<dbReference type="HAMAP" id="MF_00001">
    <property type="entry name" value="Asp_carb_tr"/>
    <property type="match status" value="1"/>
</dbReference>
<dbReference type="InterPro" id="IPR006132">
    <property type="entry name" value="Asp/Orn_carbamoyltranf_P-bd"/>
</dbReference>
<dbReference type="InterPro" id="IPR006130">
    <property type="entry name" value="Asp/Orn_carbamoylTrfase"/>
</dbReference>
<dbReference type="InterPro" id="IPR036901">
    <property type="entry name" value="Asp/Orn_carbamoylTrfase_sf"/>
</dbReference>
<dbReference type="InterPro" id="IPR002082">
    <property type="entry name" value="Asp_carbamoyltransf"/>
</dbReference>
<dbReference type="InterPro" id="IPR006131">
    <property type="entry name" value="Asp_carbamoyltransf_Asp/Orn-bd"/>
</dbReference>
<dbReference type="NCBIfam" id="TIGR00670">
    <property type="entry name" value="asp_carb_tr"/>
    <property type="match status" value="1"/>
</dbReference>
<dbReference type="NCBIfam" id="NF002032">
    <property type="entry name" value="PRK00856.1"/>
    <property type="match status" value="1"/>
</dbReference>
<dbReference type="PANTHER" id="PTHR45753:SF6">
    <property type="entry name" value="ASPARTATE CARBAMOYLTRANSFERASE"/>
    <property type="match status" value="1"/>
</dbReference>
<dbReference type="PANTHER" id="PTHR45753">
    <property type="entry name" value="ORNITHINE CARBAMOYLTRANSFERASE, MITOCHONDRIAL"/>
    <property type="match status" value="1"/>
</dbReference>
<dbReference type="Pfam" id="PF00185">
    <property type="entry name" value="OTCace"/>
    <property type="match status" value="1"/>
</dbReference>
<dbReference type="Pfam" id="PF02729">
    <property type="entry name" value="OTCace_N"/>
    <property type="match status" value="1"/>
</dbReference>
<dbReference type="PRINTS" id="PR00100">
    <property type="entry name" value="AOTCASE"/>
</dbReference>
<dbReference type="PRINTS" id="PR00101">
    <property type="entry name" value="ATCASE"/>
</dbReference>
<dbReference type="SUPFAM" id="SSF53671">
    <property type="entry name" value="Aspartate/ornithine carbamoyltransferase"/>
    <property type="match status" value="1"/>
</dbReference>
<dbReference type="PROSITE" id="PS00097">
    <property type="entry name" value="CARBAMOYLTRANSFERASE"/>
    <property type="match status" value="1"/>
</dbReference>
<gene>
    <name evidence="1" type="primary">pyrB</name>
</gene>
<name>PYRB_PSEPU</name>
<organism>
    <name type="scientific">Pseudomonas putida</name>
    <name type="common">Arthrobacter siderocapsulatus</name>
    <dbReference type="NCBI Taxonomy" id="303"/>
    <lineage>
        <taxon>Bacteria</taxon>
        <taxon>Pseudomonadati</taxon>
        <taxon>Pseudomonadota</taxon>
        <taxon>Gammaproteobacteria</taxon>
        <taxon>Pseudomonadales</taxon>
        <taxon>Pseudomonadaceae</taxon>
        <taxon>Pseudomonas</taxon>
    </lineage>
</organism>
<sequence length="334" mass="36410">MTPIDAKRPLQLNDQGQLRHFLSLDGLPRELLTEILDTADSFLEVGARAVKKVPLLRGKTVCNVFFENSTRTRTTFELAAQRLSADVISLNVSTSSTSKGETLFDTLRNLEAMAADMFVVRHSDSGAAHFIAEHVCPDVAVINGGDGRHAHPTQGMLDMLTIRRHKGSFENLSVAIVGDILHSRVARSDMLALKALGCPDIRVIGPKTLIPIGIEQYGVKVYTDLAEGLKDVDVVIMLRLQRERMAGGLLPSEGEFYRLFGLTTARLACAKPDAIVMHPGPINRGVEIESAVADGKHSVILNQVTYGIAVRMAVLSMAMSGQNAQRQFDQENAQ</sequence>
<reference key="1">
    <citation type="journal article" date="1995" name="J. Bacteriol.">
        <title>Aspartate transcarbamoylase genes of Pseudomonas putida: requirement for an inactive dihydroorotase for assembly into the dodecameric holoenzyme.</title>
        <authorList>
            <person name="Schurr M.J."/>
            <person name="Vickrey J.F."/>
            <person name="Kumar A.P."/>
            <person name="Campbell A.L."/>
            <person name="Cunin R."/>
            <person name="Benjamin R.C."/>
            <person name="Shanley M.S."/>
            <person name="O'Donovan G.A."/>
        </authorList>
    </citation>
    <scope>NUCLEOTIDE SEQUENCE [GENOMIC DNA]</scope>
    <source>
        <strain>PPN-1</strain>
    </source>
</reference>
<keyword id="KW-0665">Pyrimidine biosynthesis</keyword>
<keyword id="KW-0808">Transferase</keyword>
<comment type="function">
    <text evidence="1">Catalyzes the condensation of carbamoyl phosphate and aspartate to form carbamoyl aspartate and inorganic phosphate, the committed step in the de novo pyrimidine nucleotide biosynthesis pathway.</text>
</comment>
<comment type="catalytic activity">
    <reaction evidence="1">
        <text>carbamoyl phosphate + L-aspartate = N-carbamoyl-L-aspartate + phosphate + H(+)</text>
        <dbReference type="Rhea" id="RHEA:20013"/>
        <dbReference type="ChEBI" id="CHEBI:15378"/>
        <dbReference type="ChEBI" id="CHEBI:29991"/>
        <dbReference type="ChEBI" id="CHEBI:32814"/>
        <dbReference type="ChEBI" id="CHEBI:43474"/>
        <dbReference type="ChEBI" id="CHEBI:58228"/>
        <dbReference type="EC" id="2.1.3.2"/>
    </reaction>
</comment>
<comment type="pathway">
    <text evidence="1">Pyrimidine metabolism; UMP biosynthesis via de novo pathway; (S)-dihydroorotate from bicarbonate: step 2/3.</text>
</comment>
<comment type="subunit">
    <text evidence="1">Heterododecamer (2C3:3R2) of six catalytic PyrB chains organized as two trimers (C3), and six regulatory PyrI chains organized as three dimers (R2).</text>
</comment>
<comment type="similarity">
    <text evidence="1 2">Belongs to the aspartate/ornithine carbamoyltransferase superfamily. ATCase family.</text>
</comment>
<accession>Q59711</accession>
<evidence type="ECO:0000255" key="1">
    <source>
        <dbReference type="HAMAP-Rule" id="MF_00001"/>
    </source>
</evidence>
<evidence type="ECO:0000305" key="2"/>
<proteinExistence type="inferred from homology"/>
<feature type="chain" id="PRO_0000113178" description="Aspartate carbamoyltransferase catalytic subunit">
    <location>
        <begin position="1"/>
        <end position="334"/>
    </location>
</feature>
<feature type="binding site" evidence="1">
    <location>
        <position position="71"/>
    </location>
    <ligand>
        <name>carbamoyl phosphate</name>
        <dbReference type="ChEBI" id="CHEBI:58228"/>
    </ligand>
</feature>
<feature type="binding site" evidence="1">
    <location>
        <position position="72"/>
    </location>
    <ligand>
        <name>carbamoyl phosphate</name>
        <dbReference type="ChEBI" id="CHEBI:58228"/>
    </ligand>
</feature>
<feature type="binding site" evidence="1">
    <location>
        <position position="99"/>
    </location>
    <ligand>
        <name>L-aspartate</name>
        <dbReference type="ChEBI" id="CHEBI:29991"/>
    </ligand>
</feature>
<feature type="binding site" evidence="1">
    <location>
        <position position="121"/>
    </location>
    <ligand>
        <name>carbamoyl phosphate</name>
        <dbReference type="ChEBI" id="CHEBI:58228"/>
    </ligand>
</feature>
<feature type="binding site" evidence="1">
    <location>
        <position position="151"/>
    </location>
    <ligand>
        <name>carbamoyl phosphate</name>
        <dbReference type="ChEBI" id="CHEBI:58228"/>
    </ligand>
</feature>
<feature type="binding site" evidence="1">
    <location>
        <position position="154"/>
    </location>
    <ligand>
        <name>carbamoyl phosphate</name>
        <dbReference type="ChEBI" id="CHEBI:58228"/>
    </ligand>
</feature>
<feature type="binding site" evidence="1">
    <location>
        <position position="184"/>
    </location>
    <ligand>
        <name>L-aspartate</name>
        <dbReference type="ChEBI" id="CHEBI:29991"/>
    </ligand>
</feature>
<feature type="binding site" evidence="1">
    <location>
        <position position="239"/>
    </location>
    <ligand>
        <name>L-aspartate</name>
        <dbReference type="ChEBI" id="CHEBI:29991"/>
    </ligand>
</feature>
<feature type="binding site" evidence="1">
    <location>
        <position position="280"/>
    </location>
    <ligand>
        <name>carbamoyl phosphate</name>
        <dbReference type="ChEBI" id="CHEBI:58228"/>
    </ligand>
</feature>
<feature type="binding site" evidence="1">
    <location>
        <position position="281"/>
    </location>
    <ligand>
        <name>carbamoyl phosphate</name>
        <dbReference type="ChEBI" id="CHEBI:58228"/>
    </ligand>
</feature>
<protein>
    <recommendedName>
        <fullName evidence="1">Aspartate carbamoyltransferase catalytic subunit</fullName>
        <ecNumber evidence="1">2.1.3.2</ecNumber>
    </recommendedName>
    <alternativeName>
        <fullName evidence="1">Aspartate transcarbamylase</fullName>
        <shortName evidence="1">ATCase</shortName>
    </alternativeName>
</protein>